<proteinExistence type="inferred from homology"/>
<dbReference type="EC" id="2.7.2.1" evidence="1"/>
<dbReference type="EMBL" id="CP001615">
    <property type="protein sequence ID" value="ACQ69615.1"/>
    <property type="molecule type" value="Genomic_DNA"/>
</dbReference>
<dbReference type="RefSeq" id="WP_012726734.1">
    <property type="nucleotide sequence ID" value="NC_012673.1"/>
</dbReference>
<dbReference type="SMR" id="C4L493"/>
<dbReference type="STRING" id="360911.EAT1b_0684"/>
<dbReference type="KEGG" id="eat:EAT1b_0684"/>
<dbReference type="eggNOG" id="COG0282">
    <property type="taxonomic scope" value="Bacteria"/>
</dbReference>
<dbReference type="HOGENOM" id="CLU_020352_0_1_9"/>
<dbReference type="OrthoDB" id="9802453at2"/>
<dbReference type="UniPathway" id="UPA00340">
    <property type="reaction ID" value="UER00458"/>
</dbReference>
<dbReference type="Proteomes" id="UP000000716">
    <property type="component" value="Chromosome"/>
</dbReference>
<dbReference type="GO" id="GO:0005737">
    <property type="term" value="C:cytoplasm"/>
    <property type="evidence" value="ECO:0007669"/>
    <property type="project" value="UniProtKB-SubCell"/>
</dbReference>
<dbReference type="GO" id="GO:0008776">
    <property type="term" value="F:acetate kinase activity"/>
    <property type="evidence" value="ECO:0007669"/>
    <property type="project" value="UniProtKB-UniRule"/>
</dbReference>
<dbReference type="GO" id="GO:0005524">
    <property type="term" value="F:ATP binding"/>
    <property type="evidence" value="ECO:0007669"/>
    <property type="project" value="UniProtKB-KW"/>
</dbReference>
<dbReference type="GO" id="GO:0000287">
    <property type="term" value="F:magnesium ion binding"/>
    <property type="evidence" value="ECO:0007669"/>
    <property type="project" value="UniProtKB-UniRule"/>
</dbReference>
<dbReference type="GO" id="GO:0006083">
    <property type="term" value="P:acetate metabolic process"/>
    <property type="evidence" value="ECO:0007669"/>
    <property type="project" value="TreeGrafter"/>
</dbReference>
<dbReference type="GO" id="GO:0006085">
    <property type="term" value="P:acetyl-CoA biosynthetic process"/>
    <property type="evidence" value="ECO:0007669"/>
    <property type="project" value="UniProtKB-UniRule"/>
</dbReference>
<dbReference type="CDD" id="cd24010">
    <property type="entry name" value="ASKHA_NBD_AcK_PK"/>
    <property type="match status" value="1"/>
</dbReference>
<dbReference type="Gene3D" id="3.30.420.40">
    <property type="match status" value="2"/>
</dbReference>
<dbReference type="HAMAP" id="MF_00020">
    <property type="entry name" value="Acetate_kinase"/>
    <property type="match status" value="1"/>
</dbReference>
<dbReference type="InterPro" id="IPR004372">
    <property type="entry name" value="Ac/propionate_kinase"/>
</dbReference>
<dbReference type="InterPro" id="IPR000890">
    <property type="entry name" value="Aliphatic_acid_kin_short-chain"/>
</dbReference>
<dbReference type="InterPro" id="IPR023865">
    <property type="entry name" value="Aliphatic_acid_kinase_CS"/>
</dbReference>
<dbReference type="InterPro" id="IPR043129">
    <property type="entry name" value="ATPase_NBD"/>
</dbReference>
<dbReference type="NCBIfam" id="TIGR00016">
    <property type="entry name" value="ackA"/>
    <property type="match status" value="1"/>
</dbReference>
<dbReference type="PANTHER" id="PTHR21060">
    <property type="entry name" value="ACETATE KINASE"/>
    <property type="match status" value="1"/>
</dbReference>
<dbReference type="PANTHER" id="PTHR21060:SF15">
    <property type="entry name" value="ACETATE KINASE-RELATED"/>
    <property type="match status" value="1"/>
</dbReference>
<dbReference type="Pfam" id="PF00871">
    <property type="entry name" value="Acetate_kinase"/>
    <property type="match status" value="1"/>
</dbReference>
<dbReference type="PIRSF" id="PIRSF000722">
    <property type="entry name" value="Acetate_prop_kin"/>
    <property type="match status" value="1"/>
</dbReference>
<dbReference type="PRINTS" id="PR00471">
    <property type="entry name" value="ACETATEKNASE"/>
</dbReference>
<dbReference type="SUPFAM" id="SSF53067">
    <property type="entry name" value="Actin-like ATPase domain"/>
    <property type="match status" value="2"/>
</dbReference>
<dbReference type="PROSITE" id="PS01075">
    <property type="entry name" value="ACETATE_KINASE_1"/>
    <property type="match status" value="1"/>
</dbReference>
<dbReference type="PROSITE" id="PS01076">
    <property type="entry name" value="ACETATE_KINASE_2"/>
    <property type="match status" value="1"/>
</dbReference>
<sequence length="403" mass="44236">MTKIMAVNAGSSSLKFQLLEMPTEELLAVGLVERVGKEDAIFTIKYGEGQKFNVVTPLHTHKEAVELTLEKLIELDIIQSFDEISGVGHRVLHGKELYADSVVIDDEVMKNIESFTELGPLHIPPNLTGIRAFQAILPNVPQVAVFDTAFHQSMPEENFLYSLPYEYYTEHGVRKYGFHGTSHKYVTQRAAELLGRPLEDLRLISCHLGSGASIAAVAGGRSIDTTMGFTPLEGITMGTRSGSLDPALIPFLMQKTGKSAEDVLNVMNKESGVYGLSGISSDLRDIEQAAAEGNHRAEVSLKIFSNRIHGYIGQYAAEMNGVDAIIFTAGVGENSDVIRERILRGLEFMGVYWDPSLNNGARGKELFINYPHSPVKVIIIPTNEELVIARDTVRIANLVEAHA</sequence>
<evidence type="ECO:0000255" key="1">
    <source>
        <dbReference type="HAMAP-Rule" id="MF_00020"/>
    </source>
</evidence>
<protein>
    <recommendedName>
        <fullName evidence="1">Acetate kinase</fullName>
        <ecNumber evidence="1">2.7.2.1</ecNumber>
    </recommendedName>
    <alternativeName>
        <fullName evidence="1">Acetokinase</fullName>
    </alternativeName>
</protein>
<organism>
    <name type="scientific">Exiguobacterium sp. (strain ATCC BAA-1283 / AT1b)</name>
    <dbReference type="NCBI Taxonomy" id="360911"/>
    <lineage>
        <taxon>Bacteria</taxon>
        <taxon>Bacillati</taxon>
        <taxon>Bacillota</taxon>
        <taxon>Bacilli</taxon>
        <taxon>Bacillales</taxon>
        <taxon>Bacillales Family XII. Incertae Sedis</taxon>
        <taxon>Exiguobacterium</taxon>
    </lineage>
</organism>
<name>ACKA_EXISA</name>
<accession>C4L493</accession>
<gene>
    <name evidence="1" type="primary">ackA</name>
    <name type="ordered locus">EAT1b_0684</name>
</gene>
<keyword id="KW-0067">ATP-binding</keyword>
<keyword id="KW-0963">Cytoplasm</keyword>
<keyword id="KW-0418">Kinase</keyword>
<keyword id="KW-0460">Magnesium</keyword>
<keyword id="KW-0479">Metal-binding</keyword>
<keyword id="KW-0547">Nucleotide-binding</keyword>
<keyword id="KW-0808">Transferase</keyword>
<comment type="function">
    <text evidence="1">Catalyzes the formation of acetyl phosphate from acetate and ATP. Can also catalyze the reverse reaction.</text>
</comment>
<comment type="catalytic activity">
    <reaction evidence="1">
        <text>acetate + ATP = acetyl phosphate + ADP</text>
        <dbReference type="Rhea" id="RHEA:11352"/>
        <dbReference type="ChEBI" id="CHEBI:22191"/>
        <dbReference type="ChEBI" id="CHEBI:30089"/>
        <dbReference type="ChEBI" id="CHEBI:30616"/>
        <dbReference type="ChEBI" id="CHEBI:456216"/>
        <dbReference type="EC" id="2.7.2.1"/>
    </reaction>
</comment>
<comment type="cofactor">
    <cofactor evidence="1">
        <name>Mg(2+)</name>
        <dbReference type="ChEBI" id="CHEBI:18420"/>
    </cofactor>
    <cofactor evidence="1">
        <name>Mn(2+)</name>
        <dbReference type="ChEBI" id="CHEBI:29035"/>
    </cofactor>
    <text evidence="1">Mg(2+). Can also accept Mn(2+).</text>
</comment>
<comment type="pathway">
    <text evidence="1">Metabolic intermediate biosynthesis; acetyl-CoA biosynthesis; acetyl-CoA from acetate: step 1/2.</text>
</comment>
<comment type="subunit">
    <text evidence="1">Homodimer.</text>
</comment>
<comment type="subcellular location">
    <subcellularLocation>
        <location evidence="1">Cytoplasm</location>
    </subcellularLocation>
</comment>
<comment type="similarity">
    <text evidence="1">Belongs to the acetokinase family.</text>
</comment>
<feature type="chain" id="PRO_1000201904" description="Acetate kinase">
    <location>
        <begin position="1"/>
        <end position="403"/>
    </location>
</feature>
<feature type="active site" description="Proton donor/acceptor" evidence="1">
    <location>
        <position position="147"/>
    </location>
</feature>
<feature type="binding site" evidence="1">
    <location>
        <position position="8"/>
    </location>
    <ligand>
        <name>Mg(2+)</name>
        <dbReference type="ChEBI" id="CHEBI:18420"/>
    </ligand>
</feature>
<feature type="binding site" evidence="1">
    <location>
        <position position="15"/>
    </location>
    <ligand>
        <name>ATP</name>
        <dbReference type="ChEBI" id="CHEBI:30616"/>
    </ligand>
</feature>
<feature type="binding site" evidence="1">
    <location>
        <position position="90"/>
    </location>
    <ligand>
        <name>substrate</name>
    </ligand>
</feature>
<feature type="binding site" evidence="1">
    <location>
        <begin position="207"/>
        <end position="211"/>
    </location>
    <ligand>
        <name>ATP</name>
        <dbReference type="ChEBI" id="CHEBI:30616"/>
    </ligand>
</feature>
<feature type="binding site" evidence="1">
    <location>
        <begin position="282"/>
        <end position="284"/>
    </location>
    <ligand>
        <name>ATP</name>
        <dbReference type="ChEBI" id="CHEBI:30616"/>
    </ligand>
</feature>
<feature type="binding site" evidence="1">
    <location>
        <begin position="330"/>
        <end position="334"/>
    </location>
    <ligand>
        <name>ATP</name>
        <dbReference type="ChEBI" id="CHEBI:30616"/>
    </ligand>
</feature>
<feature type="binding site" evidence="1">
    <location>
        <position position="384"/>
    </location>
    <ligand>
        <name>Mg(2+)</name>
        <dbReference type="ChEBI" id="CHEBI:18420"/>
    </ligand>
</feature>
<feature type="site" description="Transition state stabilizer" evidence="1">
    <location>
        <position position="179"/>
    </location>
</feature>
<feature type="site" description="Transition state stabilizer" evidence="1">
    <location>
        <position position="240"/>
    </location>
</feature>
<reference key="1">
    <citation type="journal article" date="2011" name="J. Bacteriol.">
        <title>Complete genome sequence of the Thermophilic Bacterium Exiguobacterium sp. AT1b.</title>
        <authorList>
            <person name="Vishnivetskaya T.A."/>
            <person name="Lucas S."/>
            <person name="Copeland A."/>
            <person name="Lapidus A."/>
            <person name="Glavina del Rio T."/>
            <person name="Dalin E."/>
            <person name="Tice H."/>
            <person name="Bruce D.C."/>
            <person name="Goodwin L.A."/>
            <person name="Pitluck S."/>
            <person name="Saunders E."/>
            <person name="Brettin T."/>
            <person name="Detter C."/>
            <person name="Han C."/>
            <person name="Larimer F."/>
            <person name="Land M.L."/>
            <person name="Hauser L.J."/>
            <person name="Kyrpides N.C."/>
            <person name="Ovchinnikova G."/>
            <person name="Kathariou S."/>
            <person name="Ramaley R.F."/>
            <person name="Rodrigues D.F."/>
            <person name="Hendrix C."/>
            <person name="Richardson P."/>
            <person name="Tiedje J.M."/>
        </authorList>
    </citation>
    <scope>NUCLEOTIDE SEQUENCE [LARGE SCALE GENOMIC DNA]</scope>
    <source>
        <strain>ATCC BAA-1283 / AT1b</strain>
    </source>
</reference>